<comment type="function">
    <text evidence="1">May control the interaction of photosystem II (PSII) cores with the light-harvesting antenna, regulates electron flow through the 2 photosystem reaction centers. PSII is a light-driven water plastoquinone oxidoreductase, using light energy to abstract electrons from H(2)O, generating a proton gradient subsequently used for ATP formation.</text>
</comment>
<comment type="subunit">
    <text evidence="1">PSII is composed of 1 copy each of membrane proteins PsbA, PsbB, PsbC, PsbD, PsbE, PsbF, PsbH, PsbI, PsbJ, PsbK, PsbL, PsbM, PsbT, PsbY, PsbZ, Psb30/Ycf12, at least 3 peripheral proteins of the oxygen-evolving complex and a large number of cofactors. It forms dimeric complexes.</text>
</comment>
<comment type="subcellular location">
    <subcellularLocation>
        <location evidence="1">Plastid</location>
        <location evidence="1">Chloroplast thylakoid membrane</location>
        <topology evidence="1">Multi-pass membrane protein</topology>
    </subcellularLocation>
</comment>
<comment type="similarity">
    <text evidence="1 2">Belongs to the PsbZ family.</text>
</comment>
<gene>
    <name evidence="1" type="primary">psbZ</name>
</gene>
<geneLocation type="chloroplast"/>
<accession>P0C429</accession>
<reference key="1">
    <citation type="journal article" date="2004" name="Plant Physiol.">
        <title>A comparison of rice chloroplast genomes.</title>
        <authorList>
            <person name="Tang J."/>
            <person name="Xia H."/>
            <person name="Cao M."/>
            <person name="Zhang X."/>
            <person name="Zeng W."/>
            <person name="Hu S."/>
            <person name="Tong W."/>
            <person name="Wang J."/>
            <person name="Wang J."/>
            <person name="Yu J."/>
            <person name="Yang H."/>
            <person name="Zhu L."/>
        </authorList>
    </citation>
    <scope>NUCLEOTIDE SEQUENCE [LARGE SCALE GENOMIC DNA]</scope>
    <source>
        <strain>cv. PA64s</strain>
    </source>
</reference>
<organism>
    <name type="scientific">Oryza sativa</name>
    <name type="common">Rice</name>
    <dbReference type="NCBI Taxonomy" id="4530"/>
    <lineage>
        <taxon>Eukaryota</taxon>
        <taxon>Viridiplantae</taxon>
        <taxon>Streptophyta</taxon>
        <taxon>Embryophyta</taxon>
        <taxon>Tracheophyta</taxon>
        <taxon>Spermatophyta</taxon>
        <taxon>Magnoliopsida</taxon>
        <taxon>Liliopsida</taxon>
        <taxon>Poales</taxon>
        <taxon>Poaceae</taxon>
        <taxon>BOP clade</taxon>
        <taxon>Oryzoideae</taxon>
        <taxon>Oryzeae</taxon>
        <taxon>Oryzinae</taxon>
        <taxon>Oryza</taxon>
    </lineage>
</organism>
<evidence type="ECO:0000255" key="1">
    <source>
        <dbReference type="HAMAP-Rule" id="MF_00644"/>
    </source>
</evidence>
<evidence type="ECO:0000305" key="2"/>
<sequence>MTIAFQLAVFALIVTSSVLVISVPLVFASPDGWSNNKNVVFSGTSLWIGLVFLVAILNSLIS</sequence>
<protein>
    <recommendedName>
        <fullName evidence="1">Photosystem II reaction center protein Z</fullName>
        <shortName evidence="1">PSII-Z</shortName>
    </recommendedName>
</protein>
<keyword id="KW-0150">Chloroplast</keyword>
<keyword id="KW-0472">Membrane</keyword>
<keyword id="KW-0602">Photosynthesis</keyword>
<keyword id="KW-0604">Photosystem II</keyword>
<keyword id="KW-0934">Plastid</keyword>
<keyword id="KW-0674">Reaction center</keyword>
<keyword id="KW-0793">Thylakoid</keyword>
<keyword id="KW-0812">Transmembrane</keyword>
<keyword id="KW-1133">Transmembrane helix</keyword>
<dbReference type="EMBL" id="AY522331">
    <property type="status" value="NOT_ANNOTATED_CDS"/>
    <property type="molecule type" value="Genomic_DNA"/>
</dbReference>
<dbReference type="RefSeq" id="YP_009305291.1">
    <property type="nucleotide sequence ID" value="NC_031333.1"/>
</dbReference>
<dbReference type="SMR" id="P0C429"/>
<dbReference type="GeneID" id="29141339"/>
<dbReference type="GO" id="GO:0009535">
    <property type="term" value="C:chloroplast thylakoid membrane"/>
    <property type="evidence" value="ECO:0007669"/>
    <property type="project" value="UniProtKB-SubCell"/>
</dbReference>
<dbReference type="GO" id="GO:0009539">
    <property type="term" value="C:photosystem II reaction center"/>
    <property type="evidence" value="ECO:0007669"/>
    <property type="project" value="InterPro"/>
</dbReference>
<dbReference type="GO" id="GO:0009536">
    <property type="term" value="C:plastid"/>
    <property type="evidence" value="ECO:0000305"/>
    <property type="project" value="Gramene"/>
</dbReference>
<dbReference type="GO" id="GO:0015979">
    <property type="term" value="P:photosynthesis"/>
    <property type="evidence" value="ECO:0007669"/>
    <property type="project" value="UniProtKB-UniRule"/>
</dbReference>
<dbReference type="GO" id="GO:0042549">
    <property type="term" value="P:photosystem II stabilization"/>
    <property type="evidence" value="ECO:0007669"/>
    <property type="project" value="InterPro"/>
</dbReference>
<dbReference type="FunFam" id="1.10.287.740:FF:000001">
    <property type="entry name" value="Photosystem II reaction center protein Z"/>
    <property type="match status" value="1"/>
</dbReference>
<dbReference type="Gene3D" id="1.10.287.740">
    <property type="entry name" value="Photosystem II PsbZ, reaction centre"/>
    <property type="match status" value="1"/>
</dbReference>
<dbReference type="HAMAP" id="MF_00644">
    <property type="entry name" value="PSII_PsbZ"/>
    <property type="match status" value="1"/>
</dbReference>
<dbReference type="InterPro" id="IPR002644">
    <property type="entry name" value="PSII_PsbZ"/>
</dbReference>
<dbReference type="InterPro" id="IPR036512">
    <property type="entry name" value="PSII_PsbZ_sf"/>
</dbReference>
<dbReference type="NCBIfam" id="TIGR03043">
    <property type="entry name" value="PS_II_psbZ"/>
    <property type="match status" value="1"/>
</dbReference>
<dbReference type="PANTHER" id="PTHR34971">
    <property type="entry name" value="PHOTOSYSTEM II REACTION CENTER PROTEIN Z"/>
    <property type="match status" value="1"/>
</dbReference>
<dbReference type="PANTHER" id="PTHR34971:SF2">
    <property type="entry name" value="PHOTOSYSTEM II REACTION CENTER PROTEIN Z"/>
    <property type="match status" value="1"/>
</dbReference>
<dbReference type="Pfam" id="PF01737">
    <property type="entry name" value="Ycf9"/>
    <property type="match status" value="1"/>
</dbReference>
<dbReference type="SUPFAM" id="SSF161055">
    <property type="entry name" value="PsbZ-like"/>
    <property type="match status" value="1"/>
</dbReference>
<feature type="chain" id="PRO_0000289940" description="Photosystem II reaction center protein Z">
    <location>
        <begin position="1"/>
        <end position="62"/>
    </location>
</feature>
<feature type="transmembrane region" description="Helical" evidence="1">
    <location>
        <begin position="8"/>
        <end position="28"/>
    </location>
</feature>
<feature type="transmembrane region" description="Helical" evidence="1">
    <location>
        <begin position="41"/>
        <end position="61"/>
    </location>
</feature>
<proteinExistence type="inferred from homology"/>
<name>PSBZ_ORYSA</name>